<name>ACDH_MYCGI</name>
<feature type="chain" id="PRO_0000387676" description="Acetaldehyde dehydrogenase">
    <location>
        <begin position="1"/>
        <end position="306"/>
    </location>
</feature>
<feature type="active site" description="Acyl-thioester intermediate" evidence="1">
    <location>
        <position position="127"/>
    </location>
</feature>
<feature type="binding site" evidence="1">
    <location>
        <begin position="12"/>
        <end position="15"/>
    </location>
    <ligand>
        <name>NAD(+)</name>
        <dbReference type="ChEBI" id="CHEBI:57540"/>
    </ligand>
</feature>
<feature type="binding site" evidence="1">
    <location>
        <begin position="158"/>
        <end position="166"/>
    </location>
    <ligand>
        <name>NAD(+)</name>
        <dbReference type="ChEBI" id="CHEBI:57540"/>
    </ligand>
</feature>
<feature type="binding site" evidence="1">
    <location>
        <position position="277"/>
    </location>
    <ligand>
        <name>NAD(+)</name>
        <dbReference type="ChEBI" id="CHEBI:57540"/>
    </ligand>
</feature>
<sequence length="306" mass="32478">MADKLSVAIVGSGNISTDLLYKLLRSEWLEPRWMIGIDPESEGLARARKLGLETSHEGVDWLLARDEKPDMVFEATSAYVHRDAAPRYAEAGIRAIDLTPAAIGPGVIPPANLREHLDAPNVNMVTCGGQATIPMVHAVSRVVDVPYAEIVASVSSASAGPGTRANIDEFTKTTSAGVEVIGGARRGKAIIILNPADPPMIMRDTIFCAIPEDADHAAITQSVKDVVAEVQTYVPGYRLLNEPQFDEPSVVNGGNHLVTIFVEVEGAGDYLPPYAGNLDIMTAAAAKVGEEIARERVATSTTGAQA</sequence>
<gene>
    <name type="ordered locus">Mflv_1521</name>
</gene>
<accession>A4T7U3</accession>
<organism>
    <name type="scientific">Mycolicibacterium gilvum (strain PYR-GCK)</name>
    <name type="common">Mycobacterium gilvum (strain PYR-GCK)</name>
    <dbReference type="NCBI Taxonomy" id="350054"/>
    <lineage>
        <taxon>Bacteria</taxon>
        <taxon>Bacillati</taxon>
        <taxon>Actinomycetota</taxon>
        <taxon>Actinomycetes</taxon>
        <taxon>Mycobacteriales</taxon>
        <taxon>Mycobacteriaceae</taxon>
        <taxon>Mycolicibacterium</taxon>
    </lineage>
</organism>
<reference key="1">
    <citation type="submission" date="2007-04" db="EMBL/GenBank/DDBJ databases">
        <title>Complete sequence of chromosome of Mycobacterium gilvum PYR-GCK.</title>
        <authorList>
            <consortium name="US DOE Joint Genome Institute"/>
            <person name="Copeland A."/>
            <person name="Lucas S."/>
            <person name="Lapidus A."/>
            <person name="Barry K."/>
            <person name="Detter J.C."/>
            <person name="Glavina del Rio T."/>
            <person name="Hammon N."/>
            <person name="Israni S."/>
            <person name="Dalin E."/>
            <person name="Tice H."/>
            <person name="Pitluck S."/>
            <person name="Chain P."/>
            <person name="Malfatti S."/>
            <person name="Shin M."/>
            <person name="Vergez L."/>
            <person name="Schmutz J."/>
            <person name="Larimer F."/>
            <person name="Land M."/>
            <person name="Hauser L."/>
            <person name="Kyrpides N."/>
            <person name="Mikhailova N."/>
            <person name="Miller C."/>
            <person name="Richardson P."/>
        </authorList>
    </citation>
    <scope>NUCLEOTIDE SEQUENCE [LARGE SCALE GENOMIC DNA]</scope>
    <source>
        <strain>PYR-GCK</strain>
    </source>
</reference>
<comment type="catalytic activity">
    <reaction evidence="1">
        <text>acetaldehyde + NAD(+) + CoA = acetyl-CoA + NADH + H(+)</text>
        <dbReference type="Rhea" id="RHEA:23288"/>
        <dbReference type="ChEBI" id="CHEBI:15343"/>
        <dbReference type="ChEBI" id="CHEBI:15378"/>
        <dbReference type="ChEBI" id="CHEBI:57287"/>
        <dbReference type="ChEBI" id="CHEBI:57288"/>
        <dbReference type="ChEBI" id="CHEBI:57540"/>
        <dbReference type="ChEBI" id="CHEBI:57945"/>
        <dbReference type="EC" id="1.2.1.10"/>
    </reaction>
</comment>
<comment type="similarity">
    <text evidence="1">Belongs to the acetaldehyde dehydrogenase family.</text>
</comment>
<dbReference type="EC" id="1.2.1.10" evidence="1"/>
<dbReference type="EMBL" id="CP000656">
    <property type="protein sequence ID" value="ABP44003.1"/>
    <property type="molecule type" value="Genomic_DNA"/>
</dbReference>
<dbReference type="SMR" id="A4T7U3"/>
<dbReference type="STRING" id="350054.Mflv_1521"/>
<dbReference type="KEGG" id="mgi:Mflv_1521"/>
<dbReference type="eggNOG" id="COG4569">
    <property type="taxonomic scope" value="Bacteria"/>
</dbReference>
<dbReference type="HOGENOM" id="CLU_062208_0_0_11"/>
<dbReference type="OrthoDB" id="9786743at2"/>
<dbReference type="GO" id="GO:0008774">
    <property type="term" value="F:acetaldehyde dehydrogenase (acetylating) activity"/>
    <property type="evidence" value="ECO:0007669"/>
    <property type="project" value="UniProtKB-UniRule"/>
</dbReference>
<dbReference type="GO" id="GO:0051287">
    <property type="term" value="F:NAD binding"/>
    <property type="evidence" value="ECO:0007669"/>
    <property type="project" value="UniProtKB-UniRule"/>
</dbReference>
<dbReference type="GO" id="GO:0009056">
    <property type="term" value="P:catabolic process"/>
    <property type="evidence" value="ECO:0007669"/>
    <property type="project" value="UniProtKB-KW"/>
</dbReference>
<dbReference type="CDD" id="cd23933">
    <property type="entry name" value="ALDH_C"/>
    <property type="match status" value="1"/>
</dbReference>
<dbReference type="Gene3D" id="3.30.360.10">
    <property type="entry name" value="Dihydrodipicolinate Reductase, domain 2"/>
    <property type="match status" value="1"/>
</dbReference>
<dbReference type="Gene3D" id="3.40.50.720">
    <property type="entry name" value="NAD(P)-binding Rossmann-like Domain"/>
    <property type="match status" value="1"/>
</dbReference>
<dbReference type="HAMAP" id="MF_01657">
    <property type="entry name" value="Ac_ald_DH_ac"/>
    <property type="match status" value="1"/>
</dbReference>
<dbReference type="InterPro" id="IPR003361">
    <property type="entry name" value="Acetaldehyde_dehydrogenase"/>
</dbReference>
<dbReference type="InterPro" id="IPR015426">
    <property type="entry name" value="Acetylaldehyde_DH_C"/>
</dbReference>
<dbReference type="InterPro" id="IPR036291">
    <property type="entry name" value="NAD(P)-bd_dom_sf"/>
</dbReference>
<dbReference type="InterPro" id="IPR000534">
    <property type="entry name" value="Semialdehyde_DH_NAD-bd"/>
</dbReference>
<dbReference type="NCBIfam" id="TIGR03215">
    <property type="entry name" value="ac_ald_DH_ac"/>
    <property type="match status" value="1"/>
</dbReference>
<dbReference type="NCBIfam" id="NF006157">
    <property type="entry name" value="PRK08300.1"/>
    <property type="match status" value="1"/>
</dbReference>
<dbReference type="Pfam" id="PF09290">
    <property type="entry name" value="AcetDehyd-dimer"/>
    <property type="match status" value="1"/>
</dbReference>
<dbReference type="PIRSF" id="PIRSF015689">
    <property type="entry name" value="Actaldh_dh_actl"/>
    <property type="match status" value="1"/>
</dbReference>
<dbReference type="SMART" id="SM00859">
    <property type="entry name" value="Semialdhyde_dh"/>
    <property type="match status" value="1"/>
</dbReference>
<dbReference type="SUPFAM" id="SSF55347">
    <property type="entry name" value="Glyceraldehyde-3-phosphate dehydrogenase-like, C-terminal domain"/>
    <property type="match status" value="1"/>
</dbReference>
<dbReference type="SUPFAM" id="SSF51735">
    <property type="entry name" value="NAD(P)-binding Rossmann-fold domains"/>
    <property type="match status" value="1"/>
</dbReference>
<evidence type="ECO:0000255" key="1">
    <source>
        <dbReference type="HAMAP-Rule" id="MF_01657"/>
    </source>
</evidence>
<protein>
    <recommendedName>
        <fullName evidence="1">Acetaldehyde dehydrogenase</fullName>
        <ecNumber evidence="1">1.2.1.10</ecNumber>
    </recommendedName>
    <alternativeName>
        <fullName evidence="1">Acetaldehyde dehydrogenase [acetylating]</fullName>
    </alternativeName>
</protein>
<proteinExistence type="inferred from homology"/>
<keyword id="KW-0058">Aromatic hydrocarbons catabolism</keyword>
<keyword id="KW-0520">NAD</keyword>
<keyword id="KW-0560">Oxidoreductase</keyword>